<name>CATA3_ORYSJ</name>
<organism>
    <name type="scientific">Oryza sativa subsp. japonica</name>
    <name type="common">Rice</name>
    <dbReference type="NCBI Taxonomy" id="39947"/>
    <lineage>
        <taxon>Eukaryota</taxon>
        <taxon>Viridiplantae</taxon>
        <taxon>Streptophyta</taxon>
        <taxon>Embryophyta</taxon>
        <taxon>Tracheophyta</taxon>
        <taxon>Spermatophyta</taxon>
        <taxon>Magnoliopsida</taxon>
        <taxon>Liliopsida</taxon>
        <taxon>Poales</taxon>
        <taxon>Poaceae</taxon>
        <taxon>BOP clade</taxon>
        <taxon>Oryzoideae</taxon>
        <taxon>Oryzeae</taxon>
        <taxon>Oryzinae</taxon>
        <taxon>Oryza</taxon>
        <taxon>Oryza sativa</taxon>
    </lineage>
</organism>
<protein>
    <recommendedName>
        <fullName evidence="15">Catalase isozyme C</fullName>
        <shortName evidence="15">CAT-C</shortName>
        <shortName evidence="15">OsCatC</shortName>
        <ecNumber evidence="2 4 13">1.11.1.6</ecNumber>
    </recommendedName>
    <alternativeName>
        <fullName evidence="16">Protein NITRIC OXIDE EXCESS 1</fullName>
    </alternativeName>
</protein>
<comment type="function">
    <text evidence="5 7 8 14 17">Occurs in almost all aerobically respiring organisms and serves to protect cells from the toxic effects of hydrogen peroxide. Responsible for the redox homeostasis in leaves. Prevents nitric oxide (NO) accumulation and subsequent NO-mediated leaf cell death as well as the S-nitrosylation of specific proteins (e.g. glyceraldehyde 3-phosphate dehydrogenase and thioredoxin) by degrading H(2)O(2) (PubMed:22106097, PubMed:23331502). Involved in photorespiration. Promotes drought stress tolerance and recovery (Ref.13). Involved in NO-mediated enhanced tolerance to zinc oxide nanoparticles (ZnO NPs)-induced phytotoxicity (PubMed:25958266). Participates in melatonin-mediated detoxification (PubMed:25912474).</text>
</comment>
<comment type="catalytic activity">
    <reaction evidence="2 4 13">
        <text>2 H2O2 = O2 + 2 H2O</text>
        <dbReference type="Rhea" id="RHEA:20309"/>
        <dbReference type="ChEBI" id="CHEBI:15377"/>
        <dbReference type="ChEBI" id="CHEBI:15379"/>
        <dbReference type="ChEBI" id="CHEBI:16240"/>
        <dbReference type="EC" id="1.11.1.6"/>
    </reaction>
</comment>
<comment type="cofactor">
    <cofactor evidence="1">
        <name>heme</name>
        <dbReference type="ChEBI" id="CHEBI:30413"/>
    </cofactor>
</comment>
<comment type="activity regulation">
    <text evidence="4">Strongly inhibited by beta-mercaptoethanol, sodium azide and potassium cyanide. Slightly repressed by 3-amino-1,2,4-triazole (3-AT). Activity is repressed proportionally to increased concentration of NaCl, KCl, LiCl and MgCl(2).</text>
</comment>
<comment type="biophysicochemical properties">
    <kinetics>
        <KM evidence="9">43 mM for H(2)O(2) (at pH 7.4 and 30 degrees Celsius)</KM>
        <KM evidence="4">40 mM for H(2)O(2) (at pH 7.5)</KM>
        <Vmax evidence="9">251.0 mmol/min/mg enzyme (at pH 7.4 and 30 degrees Celsius)</Vmax>
        <Vmax evidence="4">0.03 umol/min/g enzyme (at pH 7.5)</Vmax>
        <text evidence="4 9">kcat is 0.5 min(-1) with H(2)O(2) as substrate (at pH 7.5) (PubMed:21979082). kcat is 28 sec(-1) with H(2)O(2) as substrate (at pH 7.4 and 30 degrees Celsius) (PubMed:26900141).</text>
    </kinetics>
    <phDependence>
        <text evidence="4">Optimum pH is 7.</text>
    </phDependence>
    <temperatureDependence>
        <text evidence="4">Optimum temperature is 30 degrees Celsius.</text>
    </temperatureDependence>
</comment>
<comment type="subunit">
    <text evidence="1 9 13">Homotetramer (By similarity). Interacts with GLO1 and GLO4; these interactions are disturbed by alpha-hydroxy-2-pyridinemethanesulfonic acid (HPMS) and salicylic acid (SA) (PubMed:26900141). Interacts with STRK1 at the plasma membrane (PubMed:29581216).</text>
</comment>
<comment type="subcellular location">
    <subcellularLocation>
        <location evidence="9 21">Peroxisome</location>
    </subcellularLocation>
    <subcellularLocation>
        <location evidence="20">Glyoxysome</location>
    </subcellularLocation>
    <subcellularLocation>
        <location evidence="13">Cell membrane</location>
    </subcellularLocation>
</comment>
<comment type="tissue specificity">
    <text evidence="3 4 5 6 9 11 12">Highly expressed in mature leaves (PubMed:21398647, PubMed:21979082, PubMed:22106097, PubMed:23331502, PubMed:26900141, PubMed:28969789, PubMed:29464319). Mainly expressed in leaf blades, stems, panicles, leaf sheaths, and culms, but barely in roots (PubMed:22106097, PubMed:23331502, PubMed:29464319).</text>
</comment>
<comment type="induction">
    <text evidence="3 6 10 11">Abundance in leaves follows a light-dependent rhythm with an oscillating expression pattern peaking early in the light period (PubMed:21398647, PubMed:23331502). Inhibited by water stress and abscisic acid (ABA) in a concentration-dependent manner (PubMed:21398647, PubMed:23331502). Enhanced by ABA biosynthesis inhibitors nordihydroguaiaretic acid and tungstate under water stress (PubMed:21398647). Slightly affected by high salinity and hydrogen peroxide (H(2)O(2)) treatments (PubMed:23331502). Accumulates upon infection by the bacterial blight agent X.oryzae pv. Oryzae (Xoo) strain PXO99 (PubMed:27185545). Repressed by cadmium (Cd) (PubMed:28969789).</text>
</comment>
<comment type="PTM">
    <text evidence="13">Activated by STRK1-mediated phosphorylation at Tyr-210 upon salt and oxidative stress.</text>
</comment>
<comment type="disruption phenotype">
    <text evidence="5 7 8 17">Impaired catalase activity in leaves. Accumulation of hydrogen peroxide (H(2)O(2)) in leaves, which consequently promotes nitric oxide (NO) production via the activation of nitrate reductase, thus leading to subsequent NO-mediated leaf cell death, as well as increased S-nitrosylation of specific proteins including glyceraldehyde 3-phosphate dehydrogenase and thioredoxin (PubMed:22106097, PubMed:23331502). Leaf bleaching and cell death; these phenotypes are reversed by melatonin treatment (PubMed:25912474). Increased tolerance to zinc oxide nanoparticles (ZnO NPs) (PubMed:25958266).</text>
</comment>
<comment type="similarity">
    <text evidence="20">Belongs to the catalase family.</text>
</comment>
<evidence type="ECO:0000250" key="1">
    <source>
        <dbReference type="UniProtKB" id="Q9C168"/>
    </source>
</evidence>
<evidence type="ECO:0000255" key="2">
    <source>
        <dbReference type="PROSITE-ProRule" id="PRU10013"/>
    </source>
</evidence>
<evidence type="ECO:0000269" key="3">
    <source>
    </source>
</evidence>
<evidence type="ECO:0000269" key="4">
    <source>
    </source>
</evidence>
<evidence type="ECO:0000269" key="5">
    <source>
    </source>
</evidence>
<evidence type="ECO:0000269" key="6">
    <source>
    </source>
</evidence>
<evidence type="ECO:0000269" key="7">
    <source>
    </source>
</evidence>
<evidence type="ECO:0000269" key="8">
    <source>
    </source>
</evidence>
<evidence type="ECO:0000269" key="9">
    <source>
    </source>
</evidence>
<evidence type="ECO:0000269" key="10">
    <source>
    </source>
</evidence>
<evidence type="ECO:0000269" key="11">
    <source>
    </source>
</evidence>
<evidence type="ECO:0000269" key="12">
    <source>
    </source>
</evidence>
<evidence type="ECO:0000269" key="13">
    <source>
    </source>
</evidence>
<evidence type="ECO:0000269" key="14">
    <source ref="13"/>
</evidence>
<evidence type="ECO:0000303" key="15">
    <source>
    </source>
</evidence>
<evidence type="ECO:0000303" key="16">
    <source>
    </source>
</evidence>
<evidence type="ECO:0000303" key="17">
    <source>
    </source>
</evidence>
<evidence type="ECO:0000303" key="18">
    <source ref="1"/>
</evidence>
<evidence type="ECO:0000303" key="19">
    <source ref="2"/>
</evidence>
<evidence type="ECO:0000305" key="20"/>
<evidence type="ECO:0000305" key="21">
    <source>
    </source>
</evidence>
<evidence type="ECO:0000312" key="22">
    <source>
        <dbReference type="EMBL" id="ABF93810.1"/>
    </source>
</evidence>
<evidence type="ECO:0000312" key="23">
    <source>
        <dbReference type="EMBL" id="BAF10775.1"/>
    </source>
</evidence>
<evidence type="ECO:0000312" key="24">
    <source>
        <dbReference type="EMBL" id="BAS82138.1"/>
    </source>
</evidence>
<evidence type="ECO:0000312" key="25">
    <source>
        <dbReference type="EMBL" id="EEE58275.1"/>
    </source>
</evidence>
<accession>Q10S82</accession>
<accession>Q7XAD9</accession>
<accession>Q9ZRI9</accession>
<proteinExistence type="evidence at protein level"/>
<sequence length="492" mass="56764">MDPYKHRPSSSFNGPLWSTNSGAPVWNNNNSLTVGSRGPILLEDYHLVEKLANFDRERIPERVVHARGASAKGFFEVTHDITHLTCADFLRAPGVQTPVIVRFSTVIHERGSPETLRDPRGFAIKFYTREGNWDLVGNNFPVFFIRDGMKFPDMVHSLKPNPKSHVQENWRILDFFSHHPESLHMFTFLFDDIGIPADYRHMDGSGVNTYTLVNRAGKSHYVKFHWKPTCGVKSLLDDEAVTVGGTNHSHATQDLYDSIAAGNFPEWKLFIQTIDPDHEDRFDFDPLDVTKTWPEDIVPLQPVGRMVLNRNIDNFFSENEQLAFCPGIIVPGIYYSDDKLLQTRIFSYSDTQRHRLGPNYLLLPPNAPKCAHHNNHYDGFMNFMHRDEEVDYFPSRYDPAKHAPRYPIPSATLTGRREKVVIAKENNFKQPGERYRSWDPARQDRFIKRWIDALSDPRLTHEIRSIWLSYWSQADRSLGQKLASRLSAKPSM</sequence>
<gene>
    <name evidence="18" type="primary">CATC</name>
    <name evidence="19" type="synonym">CAT1</name>
    <name evidence="16" type="synonym">NOE1</name>
    <name evidence="22" type="ordered locus">LOC_Os03g03910</name>
    <name evidence="23" type="ordered locus">Os03g0131200</name>
    <name evidence="25" type="ORF">OsJ_09293</name>
    <name evidence="24" type="ORF">OSNPB_030131200</name>
</gene>
<reference key="1">
    <citation type="journal article" date="1998" name="Theor. Appl. Genet.">
        <title>Evolutionary relationship of plant catalase genes inferred from exon-intron structures: isozyme divergence after the separation of monocots and dicots.</title>
        <authorList>
            <person name="Iwamoto M."/>
            <person name="Maekawa M."/>
            <person name="Saito A."/>
            <person name="Higo H."/>
            <person name="Higo K."/>
        </authorList>
        <dbReference type="AGRICOLA" id="IND21967300"/>
    </citation>
    <scope>NUCLEOTIDE SEQUENCE [GENOMIC DNA]</scope>
    <source>
        <tissue>Leaf</tissue>
    </source>
</reference>
<reference key="2">
    <citation type="submission" date="2003-07" db="EMBL/GenBank/DDBJ databases">
        <authorList>
            <person name="Peng R."/>
            <person name="Yao Q."/>
            <person name="Xiong A."/>
        </authorList>
    </citation>
    <scope>NUCLEOTIDE SEQUENCE [MRNA]</scope>
</reference>
<reference key="3">
    <citation type="journal article" date="2005" name="Genome Res.">
        <title>Sequence, annotation, and analysis of synteny between rice chromosome 3 and diverged grass species.</title>
        <authorList>
            <consortium name="The rice chromosome 3 sequencing consortium"/>
            <person name="Buell C.R."/>
            <person name="Yuan Q."/>
            <person name="Ouyang S."/>
            <person name="Liu J."/>
            <person name="Zhu W."/>
            <person name="Wang A."/>
            <person name="Maiti R."/>
            <person name="Haas B."/>
            <person name="Wortman J."/>
            <person name="Pertea M."/>
            <person name="Jones K.M."/>
            <person name="Kim M."/>
            <person name="Overton L."/>
            <person name="Tsitrin T."/>
            <person name="Fadrosh D."/>
            <person name="Bera J."/>
            <person name="Weaver B."/>
            <person name="Jin S."/>
            <person name="Johri S."/>
            <person name="Reardon M."/>
            <person name="Webb K."/>
            <person name="Hill J."/>
            <person name="Moffat K."/>
            <person name="Tallon L."/>
            <person name="Van Aken S."/>
            <person name="Lewis M."/>
            <person name="Utterback T."/>
            <person name="Feldblyum T."/>
            <person name="Zismann V."/>
            <person name="Iobst S."/>
            <person name="Hsiao J."/>
            <person name="de Vazeille A.R."/>
            <person name="Salzberg S.L."/>
            <person name="White O."/>
            <person name="Fraser C.M."/>
            <person name="Yu Y."/>
            <person name="Kim H."/>
            <person name="Rambo T."/>
            <person name="Currie J."/>
            <person name="Collura K."/>
            <person name="Kernodle-Thompson S."/>
            <person name="Wei F."/>
            <person name="Kudrna K."/>
            <person name="Ammiraju J.S.S."/>
            <person name="Luo M."/>
            <person name="Goicoechea J.L."/>
            <person name="Wing R.A."/>
            <person name="Henry D."/>
            <person name="Oates R."/>
            <person name="Palmer M."/>
            <person name="Pries G."/>
            <person name="Saski C."/>
            <person name="Simmons J."/>
            <person name="Soderlund C."/>
            <person name="Nelson W."/>
            <person name="de la Bastide M."/>
            <person name="Spiegel L."/>
            <person name="Nascimento L."/>
            <person name="Huang E."/>
            <person name="Preston R."/>
            <person name="Zutavern T."/>
            <person name="Palmer L."/>
            <person name="O'Shaughnessy A."/>
            <person name="Dike S."/>
            <person name="McCombie W.R."/>
            <person name="Minx P."/>
            <person name="Cordum H."/>
            <person name="Wilson R."/>
            <person name="Jin W."/>
            <person name="Lee H.R."/>
            <person name="Jiang J."/>
            <person name="Jackson S."/>
        </authorList>
    </citation>
    <scope>NUCLEOTIDE SEQUENCE [LARGE SCALE GENOMIC DNA]</scope>
    <source>
        <strain>cv. Nipponbare</strain>
    </source>
</reference>
<reference key="4">
    <citation type="journal article" date="2005" name="Nature">
        <title>The map-based sequence of the rice genome.</title>
        <authorList>
            <consortium name="International rice genome sequencing project (IRGSP)"/>
        </authorList>
    </citation>
    <scope>NUCLEOTIDE SEQUENCE [LARGE SCALE GENOMIC DNA]</scope>
    <source>
        <strain>cv. Nipponbare</strain>
    </source>
</reference>
<reference key="5">
    <citation type="journal article" date="2008" name="Nucleic Acids Res.">
        <title>The rice annotation project database (RAP-DB): 2008 update.</title>
        <authorList>
            <consortium name="The rice annotation project (RAP)"/>
        </authorList>
    </citation>
    <scope>GENOME REANNOTATION</scope>
    <source>
        <strain>cv. Nipponbare</strain>
    </source>
</reference>
<reference key="6">
    <citation type="journal article" date="2013" name="Rice">
        <title>Improvement of the Oryza sativa Nipponbare reference genome using next generation sequence and optical map data.</title>
        <authorList>
            <person name="Kawahara Y."/>
            <person name="de la Bastide M."/>
            <person name="Hamilton J.P."/>
            <person name="Kanamori H."/>
            <person name="McCombie W.R."/>
            <person name="Ouyang S."/>
            <person name="Schwartz D.C."/>
            <person name="Tanaka T."/>
            <person name="Wu J."/>
            <person name="Zhou S."/>
            <person name="Childs K.L."/>
            <person name="Davidson R.M."/>
            <person name="Lin H."/>
            <person name="Quesada-Ocampo L."/>
            <person name="Vaillancourt B."/>
            <person name="Sakai H."/>
            <person name="Lee S.S."/>
            <person name="Kim J."/>
            <person name="Numa H."/>
            <person name="Itoh T."/>
            <person name="Buell C.R."/>
            <person name="Matsumoto T."/>
        </authorList>
    </citation>
    <scope>GENOME REANNOTATION</scope>
    <source>
        <strain>cv. Nipponbare</strain>
    </source>
</reference>
<reference key="7">
    <citation type="journal article" date="2005" name="PLoS Biol.">
        <title>The genomes of Oryza sativa: a history of duplications.</title>
        <authorList>
            <person name="Yu J."/>
            <person name="Wang J."/>
            <person name="Lin W."/>
            <person name="Li S."/>
            <person name="Li H."/>
            <person name="Zhou J."/>
            <person name="Ni P."/>
            <person name="Dong W."/>
            <person name="Hu S."/>
            <person name="Zeng C."/>
            <person name="Zhang J."/>
            <person name="Zhang Y."/>
            <person name="Li R."/>
            <person name="Xu Z."/>
            <person name="Li S."/>
            <person name="Li X."/>
            <person name="Zheng H."/>
            <person name="Cong L."/>
            <person name="Lin L."/>
            <person name="Yin J."/>
            <person name="Geng J."/>
            <person name="Li G."/>
            <person name="Shi J."/>
            <person name="Liu J."/>
            <person name="Lv H."/>
            <person name="Li J."/>
            <person name="Wang J."/>
            <person name="Deng Y."/>
            <person name="Ran L."/>
            <person name="Shi X."/>
            <person name="Wang X."/>
            <person name="Wu Q."/>
            <person name="Li C."/>
            <person name="Ren X."/>
            <person name="Wang J."/>
            <person name="Wang X."/>
            <person name="Li D."/>
            <person name="Liu D."/>
            <person name="Zhang X."/>
            <person name="Ji Z."/>
            <person name="Zhao W."/>
            <person name="Sun Y."/>
            <person name="Zhang Z."/>
            <person name="Bao J."/>
            <person name="Han Y."/>
            <person name="Dong L."/>
            <person name="Ji J."/>
            <person name="Chen P."/>
            <person name="Wu S."/>
            <person name="Liu J."/>
            <person name="Xiao Y."/>
            <person name="Bu D."/>
            <person name="Tan J."/>
            <person name="Yang L."/>
            <person name="Ye C."/>
            <person name="Zhang J."/>
            <person name="Xu J."/>
            <person name="Zhou Y."/>
            <person name="Yu Y."/>
            <person name="Zhang B."/>
            <person name="Zhuang S."/>
            <person name="Wei H."/>
            <person name="Liu B."/>
            <person name="Lei M."/>
            <person name="Yu H."/>
            <person name="Li Y."/>
            <person name="Xu H."/>
            <person name="Wei S."/>
            <person name="He X."/>
            <person name="Fang L."/>
            <person name="Zhang Z."/>
            <person name="Zhang Y."/>
            <person name="Huang X."/>
            <person name="Su Z."/>
            <person name="Tong W."/>
            <person name="Li J."/>
            <person name="Tong Z."/>
            <person name="Li S."/>
            <person name="Ye J."/>
            <person name="Wang L."/>
            <person name="Fang L."/>
            <person name="Lei T."/>
            <person name="Chen C.-S."/>
            <person name="Chen H.-C."/>
            <person name="Xu Z."/>
            <person name="Li H."/>
            <person name="Huang H."/>
            <person name="Zhang F."/>
            <person name="Xu H."/>
            <person name="Li N."/>
            <person name="Zhao C."/>
            <person name="Li S."/>
            <person name="Dong L."/>
            <person name="Huang Y."/>
            <person name="Li L."/>
            <person name="Xi Y."/>
            <person name="Qi Q."/>
            <person name="Li W."/>
            <person name="Zhang B."/>
            <person name="Hu W."/>
            <person name="Zhang Y."/>
            <person name="Tian X."/>
            <person name="Jiao Y."/>
            <person name="Liang X."/>
            <person name="Jin J."/>
            <person name="Gao L."/>
            <person name="Zheng W."/>
            <person name="Hao B."/>
            <person name="Liu S.-M."/>
            <person name="Wang W."/>
            <person name="Yuan L."/>
            <person name="Cao M."/>
            <person name="McDermott J."/>
            <person name="Samudrala R."/>
            <person name="Wang J."/>
            <person name="Wong G.K.-S."/>
            <person name="Yang H."/>
        </authorList>
    </citation>
    <scope>NUCLEOTIDE SEQUENCE [LARGE SCALE GENOMIC DNA]</scope>
    <source>
        <strain>cv. Nipponbare</strain>
    </source>
</reference>
<reference key="8">
    <citation type="journal article" date="2003" name="Science">
        <title>Collection, mapping, and annotation of over 28,000 cDNA clones from japonica rice.</title>
        <authorList>
            <consortium name="The rice full-length cDNA consortium"/>
        </authorList>
    </citation>
    <scope>NUCLEOTIDE SEQUENCE [LARGE SCALE MRNA]</scope>
    <source>
        <strain>cv. Nipponbare</strain>
    </source>
</reference>
<reference key="9">
    <citation type="journal article" date="2011" name="Biosci. Biotechnol. Biochem.">
        <title>Cloning and characterization of catalases from rice, Oryza sativa L.</title>
        <authorList>
            <person name="Wutipraditkul N."/>
            <person name="Boonkomrat S."/>
            <person name="Buaboocha T."/>
        </authorList>
    </citation>
    <scope>BIOPHYSICOCHEMICAL PROPERTIES</scope>
    <scope>CATALYTIC ACTIVITY</scope>
    <scope>ACTIVITY REGULATION</scope>
    <scope>TISSUE SPECIFICITY</scope>
</reference>
<reference key="10">
    <citation type="journal article" date="2011" name="Plant Cell Physiol.">
        <title>ABA controls H(2)O(2) accumulation through the induction of OsCATB in rice leaves under water stress.</title>
        <authorList>
            <person name="Ye N."/>
            <person name="Zhu G."/>
            <person name="Liu Y."/>
            <person name="Li Y."/>
            <person name="Zhang J."/>
        </authorList>
    </citation>
    <scope>INHIBITION BY WATER STRESS AND ABSCISIC ACID</scope>
    <scope>SUBCELLULAR LOCATION</scope>
    <source>
        <strain>cv. Yangdao 6</strain>
    </source>
</reference>
<reference key="11">
    <citation type="journal article" date="2012" name="Plant Physiol.">
        <title>Nitric oxide and protein S-nitrosylation are integral to hydrogen peroxide-induced leaf cell death in rice.</title>
        <authorList>
            <person name="Lin A."/>
            <person name="Wang Y."/>
            <person name="Tang J."/>
            <person name="Xue P."/>
            <person name="Li C."/>
            <person name="Liu L."/>
            <person name="Hu B."/>
            <person name="Yang F."/>
            <person name="Loake G.J."/>
            <person name="Chu C."/>
        </authorList>
    </citation>
    <scope>FUNCTION</scope>
    <scope>DISRUPTION PHENOTYPE</scope>
    <scope>TISSUE SPECIFICITY</scope>
</reference>
<reference key="12">
    <citation type="journal article" date="2013" name="J. Integr. Plant Biol.">
        <title>H2O2-induced leaf cell death and the crosstalk of reactive nitric/oxygen species.</title>
        <authorList>
            <person name="Wang Y."/>
            <person name="Lin A."/>
            <person name="Loake G.J."/>
            <person name="Chu C."/>
        </authorList>
    </citation>
    <scope>REVIEW</scope>
</reference>
<reference key="13">
    <citation type="journal article" date="2014" name="J. Plant Biol.">
        <title>Rice CatA, CatB, and CatC are involved in environmental stress response, root growth, and photorespiration, respectively.</title>
        <authorList>
            <person name="Joo J."/>
            <person name="Lee Y.H."/>
            <person name="Song S.I."/>
        </authorList>
    </citation>
    <scope>FUNCTION</scope>
    <scope>INDUCTION BY LIGHT AND ABIOTIC STRESSES</scope>
    <scope>TISSUE SPECIFICITY</scope>
</reference>
<reference key="14">
    <citation type="journal article" date="2015" name="J. Hazard. Mater.">
        <title>Nitric oxide ameliorates zinc oxide nanoparticles-induced phytotoxicity in rice seedlings.</title>
        <authorList>
            <person name="Chen J."/>
            <person name="Liu X."/>
            <person name="Wang C."/>
            <person name="Yin S.-S."/>
            <person name="Li X.-L."/>
            <person name="Hu W.-J."/>
            <person name="Simon M."/>
            <person name="Shen Z.-J."/>
            <person name="Xiao Q."/>
            <person name="Chu C.-C."/>
            <person name="Peng X.-X."/>
            <person name="Zheng H.-L."/>
        </authorList>
    </citation>
    <scope>FUNCTION</scope>
    <scope>DISRUPTION PHENOTYPE</scope>
    <source>
        <strain>cv. Jiafuzhan</strain>
    </source>
</reference>
<reference key="15">
    <citation type="journal article" date="2015" name="J. Pineal Res.">
        <title>Melatonin delays leaf senescence and enhances salt stress tolerance in rice.</title>
        <authorList>
            <person name="Liang C."/>
            <person name="Zheng G."/>
            <person name="Li W."/>
            <person name="Wang Y."/>
            <person name="Hu B."/>
            <person name="Wang H."/>
            <person name="Wu H."/>
            <person name="Qian Y."/>
            <person name="Zhu X.G."/>
            <person name="Tan D.X."/>
            <person name="Chen S.Y."/>
            <person name="Chu C."/>
        </authorList>
    </citation>
    <scope>FUNCTION</scope>
    <scope>DISRUPTION PHENOTYPE</scope>
</reference>
<reference key="16">
    <citation type="journal article" date="2016" name="Mol. Plant">
        <title>Association-dissociation of glycolate oxidase with catalase in rice: a potential switch to modulate intracellular H2O2 levels.</title>
        <authorList>
            <person name="Zhang Z."/>
            <person name="Xu Y."/>
            <person name="Xie Z."/>
            <person name="Li X."/>
            <person name="He Z.-H."/>
            <person name="Peng X.-X."/>
        </authorList>
    </citation>
    <scope>TISSUE SPECIFICITY</scope>
    <scope>SUBCELLULAR LOCATION</scope>
    <scope>BIOPHYSICOCHEMICAL PROPERTIES</scope>
    <scope>INTERACTION WITH GLO1 AND GLO4</scope>
    <source>
        <strain>cv. Zhonghua 11</strain>
    </source>
</reference>
<reference key="17">
    <citation type="journal article" date="2016" name="Sci. Rep.">
        <title>The rice thylakoid membrane-bound ascorbate peroxidase OsAPX8 functions in tolerance to bacterial blight.</title>
        <authorList>
            <person name="Jiang G."/>
            <person name="Yin D."/>
            <person name="Zhao J."/>
            <person name="Chen H."/>
            <person name="Guo L."/>
            <person name="Zhu L."/>
            <person name="Zhai W."/>
        </authorList>
    </citation>
    <scope>INDUCTION BY XANTHOMONAS ORYZAE</scope>
</reference>
<reference key="18">
    <citation type="journal article" date="2017" name="Plant Sci.">
        <title>OsMYB45 plays an important role in rice resistance to cadmium stress.</title>
        <authorList>
            <person name="Hu S."/>
            <person name="Yu Y."/>
            <person name="Chen Q."/>
            <person name="Mu G."/>
            <person name="Shen Z."/>
            <person name="Zheng L."/>
        </authorList>
    </citation>
    <scope>INHIBITION BY CADMIUM</scope>
    <scope>TISSUE SPECIFICITY</scope>
</reference>
<reference key="19">
    <citation type="journal article" date="2018" name="Plant Cell">
        <title>The receptor-like cytoplasmic kinase STRK1 phosphorylates and activates CatC, thereby regulating H2O2 homeostasis and improving salt tolerance in rice.</title>
        <authorList>
            <person name="Zhou Y.-B."/>
            <person name="Liu C."/>
            <person name="Tang D.-Y."/>
            <person name="Yan L."/>
            <person name="Wang D."/>
            <person name="Yang Y.-Z."/>
            <person name="Gui J.-S."/>
            <person name="Zhao X.-Y."/>
            <person name="Li L.-G."/>
            <person name="Tang X.-D."/>
            <person name="Yu F."/>
            <person name="Li J.-L."/>
            <person name="Liu L.-L."/>
            <person name="Zhu Y.-H."/>
            <person name="Lin J.-Z."/>
            <person name="Liu X.-M."/>
        </authorList>
    </citation>
    <scope>PHOSPHORYLATION AT TYR-210</scope>
    <scope>MUTAGENESIS OF TYR-210 AND TYR-360</scope>
    <scope>INTERACTION WITH STRK1</scope>
    <scope>SUBCELLULAR LOCATION</scope>
    <scope>CATALYTIC ACTIVITY</scope>
    <source>
        <strain>cv. Kitaake</strain>
    </source>
</reference>
<reference key="20">
    <citation type="journal article" date="2018" name="Plant Cell Rep.">
        <title>Involvement of CAT in the detoxification of HT-induced ROS burst in rice anther and its relation to pollen fertility.</title>
        <authorList>
            <person name="Zhao Q."/>
            <person name="Zhou L."/>
            <person name="Liu J."/>
            <person name="Cao Z."/>
            <person name="Du X."/>
            <person name="Huang F."/>
            <person name="Pan G."/>
            <person name="Cheng F."/>
        </authorList>
    </citation>
    <scope>TISSUE SPECIFICITY</scope>
</reference>
<feature type="chain" id="PRO_0000445626" description="Catalase isozyme C">
    <location>
        <begin position="1"/>
        <end position="492"/>
    </location>
</feature>
<feature type="short sequence motif" description="Peroxisome targeting signal" evidence="21">
    <location>
        <begin position="484"/>
        <end position="492"/>
    </location>
</feature>
<feature type="active site" evidence="2">
    <location>
        <position position="65"/>
    </location>
</feature>
<feature type="active site" evidence="1">
    <location>
        <position position="138"/>
    </location>
</feature>
<feature type="binding site" evidence="1">
    <location>
        <position position="62"/>
    </location>
    <ligand>
        <name>heme</name>
        <dbReference type="ChEBI" id="CHEBI:30413"/>
    </ligand>
</feature>
<feature type="binding site" evidence="1">
    <location>
        <position position="102"/>
    </location>
    <ligand>
        <name>heme</name>
        <dbReference type="ChEBI" id="CHEBI:30413"/>
    </ligand>
</feature>
<feature type="binding site" evidence="1">
    <location>
        <position position="151"/>
    </location>
    <ligand>
        <name>heme</name>
        <dbReference type="ChEBI" id="CHEBI:30413"/>
    </ligand>
</feature>
<feature type="binding site" evidence="1">
    <location>
        <position position="344"/>
    </location>
    <ligand>
        <name>heme</name>
        <dbReference type="ChEBI" id="CHEBI:30413"/>
    </ligand>
</feature>
<feature type="binding site" description="axial binding residue" evidence="1">
    <location>
        <position position="348"/>
    </location>
    <ligand>
        <name>heme</name>
        <dbReference type="ChEBI" id="CHEBI:30413"/>
    </ligand>
    <ligandPart>
        <name>Fe</name>
        <dbReference type="ChEBI" id="CHEBI:18248"/>
    </ligandPart>
</feature>
<feature type="binding site" evidence="1">
    <location>
        <position position="355"/>
    </location>
    <ligand>
        <name>heme</name>
        <dbReference type="ChEBI" id="CHEBI:30413"/>
    </ligand>
</feature>
<feature type="modified residue" description="Phosphotyrosine; by STRK1" evidence="13">
    <location>
        <position position="210"/>
    </location>
</feature>
<feature type="cross-link" description="3-(S-cysteinyl)-tyrosine (Cys-Tyr)" evidence="1">
    <location>
        <begin position="325"/>
        <end position="348"/>
    </location>
</feature>
<feature type="mutagenesis site" description="Phosphorylation mimic exhibits higher catalase activity. Impaired STRK1-mediated phosphorylation." evidence="13">
    <original>Y</original>
    <variation>D</variation>
    <location>
        <position position="210"/>
    </location>
</feature>
<feature type="mutagenesis site" description="Non-phosphorylation mimic exhibits loss of catalase activity. Impaired STRK1-mediated phosphorylation." evidence="13">
    <original>Y</original>
    <variation>F</variation>
    <location>
        <position position="210"/>
    </location>
</feature>
<feature type="mutagenesis site" description="Normal STRK1-mediated phosphorylation and subsequent catalase activity enhancement." evidence="13">
    <original>Y</original>
    <variation>D</variation>
    <variation>F</variation>
    <location>
        <position position="360"/>
    </location>
</feature>
<feature type="sequence conflict" description="In Ref. 1; BAA34205 and 2; AAQ19030." evidence="20" ref="1 2">
    <original>G</original>
    <variation>V</variation>
    <location>
        <position position="121"/>
    </location>
</feature>
<keyword id="KW-1003">Cell membrane</keyword>
<keyword id="KW-0330">Glyoxysome</keyword>
<keyword id="KW-0349">Heme</keyword>
<keyword id="KW-0376">Hydrogen peroxide</keyword>
<keyword id="KW-0408">Iron</keyword>
<keyword id="KW-0472">Membrane</keyword>
<keyword id="KW-0479">Metal-binding</keyword>
<keyword id="KW-0560">Oxidoreductase</keyword>
<keyword id="KW-0575">Peroxidase</keyword>
<keyword id="KW-0576">Peroxisome</keyword>
<keyword id="KW-0597">Phosphoprotein</keyword>
<keyword id="KW-1185">Reference proteome</keyword>
<keyword id="KW-0346">Stress response</keyword>
<keyword id="KW-0883">Thioether bond</keyword>
<dbReference type="EC" id="1.11.1.6" evidence="2 4 13"/>
<dbReference type="EMBL" id="D86611">
    <property type="protein sequence ID" value="BAA34205.1"/>
    <property type="molecule type" value="Genomic_DNA"/>
</dbReference>
<dbReference type="EMBL" id="AY339372">
    <property type="protein sequence ID" value="AAQ19030.1"/>
    <property type="molecule type" value="mRNA"/>
</dbReference>
<dbReference type="EMBL" id="DP000009">
    <property type="protein sequence ID" value="ABF93810.1"/>
    <property type="molecule type" value="Genomic_DNA"/>
</dbReference>
<dbReference type="EMBL" id="AP008209">
    <property type="protein sequence ID" value="BAF10775.1"/>
    <property type="molecule type" value="Genomic_DNA"/>
</dbReference>
<dbReference type="EMBL" id="AP014959">
    <property type="protein sequence ID" value="BAS82138.1"/>
    <property type="molecule type" value="Genomic_DNA"/>
</dbReference>
<dbReference type="EMBL" id="CM000140">
    <property type="protein sequence ID" value="EEE58275.1"/>
    <property type="molecule type" value="Genomic_DNA"/>
</dbReference>
<dbReference type="EMBL" id="AK062174">
    <property type="protein sequence ID" value="BAG88238.1"/>
    <property type="molecule type" value="mRNA"/>
</dbReference>
<dbReference type="EMBL" id="AK066378">
    <property type="protein sequence ID" value="BAG89941.1"/>
    <property type="molecule type" value="mRNA"/>
</dbReference>
<dbReference type="SMR" id="Q10S82"/>
<dbReference type="FunCoup" id="Q10S82">
    <property type="interactions" value="2094"/>
</dbReference>
<dbReference type="STRING" id="39947.Q10S82"/>
<dbReference type="PeroxiBase" id="5144">
    <property type="entry name" value="OsKat03"/>
</dbReference>
<dbReference type="iPTMnet" id="Q10S82"/>
<dbReference type="PaxDb" id="39947-Q10S82"/>
<dbReference type="EnsemblPlants" id="Os03t0131200-01">
    <property type="protein sequence ID" value="Os03t0131200-01"/>
    <property type="gene ID" value="Os03g0131200"/>
</dbReference>
<dbReference type="EnsemblPlants" id="Os03t0131200-02">
    <property type="protein sequence ID" value="Os03t0131200-02"/>
    <property type="gene ID" value="Os03g0131200"/>
</dbReference>
<dbReference type="GeneID" id="4331509"/>
<dbReference type="Gramene" id="Os03t0131200-01">
    <property type="protein sequence ID" value="Os03t0131200-01"/>
    <property type="gene ID" value="Os03g0131200"/>
</dbReference>
<dbReference type="Gramene" id="Os03t0131200-02">
    <property type="protein sequence ID" value="Os03t0131200-02"/>
    <property type="gene ID" value="Os03g0131200"/>
</dbReference>
<dbReference type="KEGG" id="dosa:Os03g0131200"/>
<dbReference type="KEGG" id="osa:4331509"/>
<dbReference type="eggNOG" id="KOG0047">
    <property type="taxonomic scope" value="Eukaryota"/>
</dbReference>
<dbReference type="HOGENOM" id="CLU_010645_4_0_1"/>
<dbReference type="InParanoid" id="Q10S82"/>
<dbReference type="OMA" id="FYNQGAR"/>
<dbReference type="OrthoDB" id="6880011at2759"/>
<dbReference type="Proteomes" id="UP000000763">
    <property type="component" value="Chromosome 3"/>
</dbReference>
<dbReference type="Proteomes" id="UP000007752">
    <property type="component" value="Chromosome 3"/>
</dbReference>
<dbReference type="Proteomes" id="UP000059680">
    <property type="component" value="Chromosome 3"/>
</dbReference>
<dbReference type="GO" id="GO:0005737">
    <property type="term" value="C:cytoplasm"/>
    <property type="evidence" value="ECO:0000318"/>
    <property type="project" value="GO_Central"/>
</dbReference>
<dbReference type="GO" id="GO:0009514">
    <property type="term" value="C:glyoxysome"/>
    <property type="evidence" value="ECO:0007669"/>
    <property type="project" value="UniProtKB-SubCell"/>
</dbReference>
<dbReference type="GO" id="GO:0005777">
    <property type="term" value="C:peroxisome"/>
    <property type="evidence" value="ECO:0000314"/>
    <property type="project" value="UniProtKB"/>
</dbReference>
<dbReference type="GO" id="GO:0005886">
    <property type="term" value="C:plasma membrane"/>
    <property type="evidence" value="ECO:0000314"/>
    <property type="project" value="UniProtKB"/>
</dbReference>
<dbReference type="GO" id="GO:0004096">
    <property type="term" value="F:catalase activity"/>
    <property type="evidence" value="ECO:0000314"/>
    <property type="project" value="UniProtKB"/>
</dbReference>
<dbReference type="GO" id="GO:0020037">
    <property type="term" value="F:heme binding"/>
    <property type="evidence" value="ECO:0000318"/>
    <property type="project" value="GO_Central"/>
</dbReference>
<dbReference type="GO" id="GO:0046872">
    <property type="term" value="F:metal ion binding"/>
    <property type="evidence" value="ECO:0007669"/>
    <property type="project" value="UniProtKB-KW"/>
</dbReference>
<dbReference type="GO" id="GO:0045454">
    <property type="term" value="P:cell redox homeostasis"/>
    <property type="evidence" value="ECO:0000315"/>
    <property type="project" value="UniProtKB"/>
</dbReference>
<dbReference type="GO" id="GO:0007623">
    <property type="term" value="P:circadian rhythm"/>
    <property type="evidence" value="ECO:0000270"/>
    <property type="project" value="UniProtKB"/>
</dbReference>
<dbReference type="GO" id="GO:0050665">
    <property type="term" value="P:hydrogen peroxide biosynthetic process"/>
    <property type="evidence" value="ECO:0000315"/>
    <property type="project" value="UniProtKB"/>
</dbReference>
<dbReference type="GO" id="GO:0042744">
    <property type="term" value="P:hydrogen peroxide catabolic process"/>
    <property type="evidence" value="ECO:0000318"/>
    <property type="project" value="GO_Central"/>
</dbReference>
<dbReference type="GO" id="GO:0033484">
    <property type="term" value="P:intracellular nitric oxide homeostasis"/>
    <property type="evidence" value="ECO:0000315"/>
    <property type="project" value="UniProtKB"/>
</dbReference>
<dbReference type="GO" id="GO:0017014">
    <property type="term" value="P:protein nitrosylation"/>
    <property type="evidence" value="ECO:0000315"/>
    <property type="project" value="UniProtKB"/>
</dbReference>
<dbReference type="GO" id="GO:0009737">
    <property type="term" value="P:response to abscisic acid"/>
    <property type="evidence" value="ECO:0000270"/>
    <property type="project" value="UniProtKB"/>
</dbReference>
<dbReference type="GO" id="GO:0009617">
    <property type="term" value="P:response to bacterium"/>
    <property type="evidence" value="ECO:0000270"/>
    <property type="project" value="UniProtKB"/>
</dbReference>
<dbReference type="GO" id="GO:0046686">
    <property type="term" value="P:response to cadmium ion"/>
    <property type="evidence" value="ECO:0000270"/>
    <property type="project" value="UniProtKB"/>
</dbReference>
<dbReference type="GO" id="GO:0042542">
    <property type="term" value="P:response to hydrogen peroxide"/>
    <property type="evidence" value="ECO:0000270"/>
    <property type="project" value="UniProtKB"/>
</dbReference>
<dbReference type="GO" id="GO:0009416">
    <property type="term" value="P:response to light stimulus"/>
    <property type="evidence" value="ECO:0000270"/>
    <property type="project" value="UniProtKB"/>
</dbReference>
<dbReference type="GO" id="GO:1902074">
    <property type="term" value="P:response to salt"/>
    <property type="evidence" value="ECO:0000270"/>
    <property type="project" value="UniProtKB"/>
</dbReference>
<dbReference type="GO" id="GO:0009414">
    <property type="term" value="P:response to water deprivation"/>
    <property type="evidence" value="ECO:0000270"/>
    <property type="project" value="UniProtKB"/>
</dbReference>
<dbReference type="CDD" id="cd08154">
    <property type="entry name" value="catalase_clade_1"/>
    <property type="match status" value="1"/>
</dbReference>
<dbReference type="FunFam" id="2.40.180.10:FF:000002">
    <property type="entry name" value="Catalase"/>
    <property type="match status" value="1"/>
</dbReference>
<dbReference type="Gene3D" id="2.40.180.10">
    <property type="entry name" value="Catalase core domain"/>
    <property type="match status" value="1"/>
</dbReference>
<dbReference type="InterPro" id="IPR018028">
    <property type="entry name" value="Catalase"/>
</dbReference>
<dbReference type="InterPro" id="IPR024708">
    <property type="entry name" value="Catalase_AS"/>
</dbReference>
<dbReference type="InterPro" id="IPR024711">
    <property type="entry name" value="Catalase_clade1/3"/>
</dbReference>
<dbReference type="InterPro" id="IPR011614">
    <property type="entry name" value="Catalase_core"/>
</dbReference>
<dbReference type="InterPro" id="IPR002226">
    <property type="entry name" value="Catalase_haem_BS"/>
</dbReference>
<dbReference type="InterPro" id="IPR010582">
    <property type="entry name" value="Catalase_immune_responsive"/>
</dbReference>
<dbReference type="InterPro" id="IPR020835">
    <property type="entry name" value="Catalase_sf"/>
</dbReference>
<dbReference type="PANTHER" id="PTHR11465">
    <property type="entry name" value="CATALASE"/>
    <property type="match status" value="1"/>
</dbReference>
<dbReference type="PANTHER" id="PTHR11465:SF23">
    <property type="entry name" value="CATALASE-2"/>
    <property type="match status" value="1"/>
</dbReference>
<dbReference type="Pfam" id="PF00199">
    <property type="entry name" value="Catalase"/>
    <property type="match status" value="1"/>
</dbReference>
<dbReference type="Pfam" id="PF06628">
    <property type="entry name" value="Catalase-rel"/>
    <property type="match status" value="1"/>
</dbReference>
<dbReference type="PIRSF" id="PIRSF038928">
    <property type="entry name" value="Catalase_clade1-3"/>
    <property type="match status" value="1"/>
</dbReference>
<dbReference type="PRINTS" id="PR00067">
    <property type="entry name" value="CATALASE"/>
</dbReference>
<dbReference type="SMART" id="SM01060">
    <property type="entry name" value="Catalase"/>
    <property type="match status" value="1"/>
</dbReference>
<dbReference type="SUPFAM" id="SSF56634">
    <property type="entry name" value="Heme-dependent catalase-like"/>
    <property type="match status" value="1"/>
</dbReference>
<dbReference type="PROSITE" id="PS00437">
    <property type="entry name" value="CATALASE_1"/>
    <property type="match status" value="1"/>
</dbReference>
<dbReference type="PROSITE" id="PS00438">
    <property type="entry name" value="CATALASE_2"/>
    <property type="match status" value="1"/>
</dbReference>
<dbReference type="PROSITE" id="PS51402">
    <property type="entry name" value="CATALASE_3"/>
    <property type="match status" value="1"/>
</dbReference>